<proteinExistence type="inferred from homology"/>
<protein>
    <recommendedName>
        <fullName evidence="1">Large ribosomal subunit protein uL1</fullName>
    </recommendedName>
    <alternativeName>
        <fullName evidence="2">50S ribosomal protein L1</fullName>
    </alternativeName>
</protein>
<comment type="function">
    <text evidence="1">Binds directly to 23S rRNA. The L1 stalk is quite mobile in the ribosome, and is involved in E site tRNA release.</text>
</comment>
<comment type="function">
    <text evidence="1">Protein L1 is also a translational repressor protein, it controls the translation of the L11 operon by binding to its mRNA.</text>
</comment>
<comment type="subunit">
    <text evidence="1">Part of the 50S ribosomal subunit.</text>
</comment>
<comment type="similarity">
    <text evidence="1">Belongs to the universal ribosomal protein uL1 family.</text>
</comment>
<keyword id="KW-1185">Reference proteome</keyword>
<keyword id="KW-0678">Repressor</keyword>
<keyword id="KW-0687">Ribonucleoprotein</keyword>
<keyword id="KW-0689">Ribosomal protein</keyword>
<keyword id="KW-0694">RNA-binding</keyword>
<keyword id="KW-0699">rRNA-binding</keyword>
<keyword id="KW-0810">Translation regulation</keyword>
<keyword id="KW-0820">tRNA-binding</keyword>
<organism>
    <name type="scientific">Bifidobacterium animalis subsp. lactis (strain AD011)</name>
    <dbReference type="NCBI Taxonomy" id="442563"/>
    <lineage>
        <taxon>Bacteria</taxon>
        <taxon>Bacillati</taxon>
        <taxon>Actinomycetota</taxon>
        <taxon>Actinomycetes</taxon>
        <taxon>Bifidobacteriales</taxon>
        <taxon>Bifidobacteriaceae</taxon>
        <taxon>Bifidobacterium</taxon>
    </lineage>
</organism>
<evidence type="ECO:0000255" key="1">
    <source>
        <dbReference type="HAMAP-Rule" id="MF_01318"/>
    </source>
</evidence>
<evidence type="ECO:0000305" key="2"/>
<name>RL1_BIFA0</name>
<sequence length="229" mass="24733">MAKHSKKYREAAERIDRNNLYTPEEAIALLKSMPAYNFDQTVEAVLRLNVDPRKADQLVRGSVNLPNGTGKTAKVLVFARGPKATEALEAGADIVGDDDLVEKVANGFLDFDSVVATPDMMGKVGRLGRVLGPRGLMPNPKTGTVTMDVTKAIKDIKGGKVDFRVDKNGNLSFLFGKLSFSAEALDQNFRAVADEVKRLKPATVKGRYITKATISSTMNPGIPVDPASI</sequence>
<dbReference type="EMBL" id="CP001213">
    <property type="protein sequence ID" value="ACL28598.1"/>
    <property type="molecule type" value="Genomic_DNA"/>
</dbReference>
<dbReference type="RefSeq" id="WP_004268437.1">
    <property type="nucleotide sequence ID" value="NC_011835.1"/>
</dbReference>
<dbReference type="SMR" id="B8DVU7"/>
<dbReference type="STRING" id="442563.BLA_0296"/>
<dbReference type="GeneID" id="29695844"/>
<dbReference type="KEGG" id="bla:BLA_0296"/>
<dbReference type="HOGENOM" id="CLU_062853_0_0_11"/>
<dbReference type="Proteomes" id="UP000002456">
    <property type="component" value="Chromosome"/>
</dbReference>
<dbReference type="GO" id="GO:0015934">
    <property type="term" value="C:large ribosomal subunit"/>
    <property type="evidence" value="ECO:0007669"/>
    <property type="project" value="InterPro"/>
</dbReference>
<dbReference type="GO" id="GO:0019843">
    <property type="term" value="F:rRNA binding"/>
    <property type="evidence" value="ECO:0007669"/>
    <property type="project" value="UniProtKB-UniRule"/>
</dbReference>
<dbReference type="GO" id="GO:0003735">
    <property type="term" value="F:structural constituent of ribosome"/>
    <property type="evidence" value="ECO:0007669"/>
    <property type="project" value="InterPro"/>
</dbReference>
<dbReference type="GO" id="GO:0000049">
    <property type="term" value="F:tRNA binding"/>
    <property type="evidence" value="ECO:0007669"/>
    <property type="project" value="UniProtKB-KW"/>
</dbReference>
<dbReference type="GO" id="GO:0006417">
    <property type="term" value="P:regulation of translation"/>
    <property type="evidence" value="ECO:0007669"/>
    <property type="project" value="UniProtKB-KW"/>
</dbReference>
<dbReference type="GO" id="GO:0006412">
    <property type="term" value="P:translation"/>
    <property type="evidence" value="ECO:0007669"/>
    <property type="project" value="UniProtKB-UniRule"/>
</dbReference>
<dbReference type="CDD" id="cd00403">
    <property type="entry name" value="Ribosomal_L1"/>
    <property type="match status" value="1"/>
</dbReference>
<dbReference type="FunFam" id="3.40.50.790:FF:000001">
    <property type="entry name" value="50S ribosomal protein L1"/>
    <property type="match status" value="1"/>
</dbReference>
<dbReference type="Gene3D" id="3.30.190.20">
    <property type="match status" value="1"/>
</dbReference>
<dbReference type="Gene3D" id="3.40.50.790">
    <property type="match status" value="1"/>
</dbReference>
<dbReference type="HAMAP" id="MF_01318_B">
    <property type="entry name" value="Ribosomal_uL1_B"/>
    <property type="match status" value="1"/>
</dbReference>
<dbReference type="InterPro" id="IPR005878">
    <property type="entry name" value="Ribosom_uL1_bac-type"/>
</dbReference>
<dbReference type="InterPro" id="IPR002143">
    <property type="entry name" value="Ribosomal_uL1"/>
</dbReference>
<dbReference type="InterPro" id="IPR023674">
    <property type="entry name" value="Ribosomal_uL1-like"/>
</dbReference>
<dbReference type="InterPro" id="IPR028364">
    <property type="entry name" value="Ribosomal_uL1/biogenesis"/>
</dbReference>
<dbReference type="InterPro" id="IPR016095">
    <property type="entry name" value="Ribosomal_uL1_3-a/b-sand"/>
</dbReference>
<dbReference type="InterPro" id="IPR023673">
    <property type="entry name" value="Ribosomal_uL1_CS"/>
</dbReference>
<dbReference type="NCBIfam" id="TIGR01169">
    <property type="entry name" value="rplA_bact"/>
    <property type="match status" value="1"/>
</dbReference>
<dbReference type="PANTHER" id="PTHR36427">
    <property type="entry name" value="54S RIBOSOMAL PROTEIN L1, MITOCHONDRIAL"/>
    <property type="match status" value="1"/>
</dbReference>
<dbReference type="PANTHER" id="PTHR36427:SF3">
    <property type="entry name" value="LARGE RIBOSOMAL SUBUNIT PROTEIN UL1M"/>
    <property type="match status" value="1"/>
</dbReference>
<dbReference type="Pfam" id="PF00687">
    <property type="entry name" value="Ribosomal_L1"/>
    <property type="match status" value="1"/>
</dbReference>
<dbReference type="PIRSF" id="PIRSF002155">
    <property type="entry name" value="Ribosomal_L1"/>
    <property type="match status" value="1"/>
</dbReference>
<dbReference type="SUPFAM" id="SSF56808">
    <property type="entry name" value="Ribosomal protein L1"/>
    <property type="match status" value="1"/>
</dbReference>
<dbReference type="PROSITE" id="PS01199">
    <property type="entry name" value="RIBOSOMAL_L1"/>
    <property type="match status" value="1"/>
</dbReference>
<accession>B8DVU7</accession>
<gene>
    <name evidence="1" type="primary">rplA</name>
    <name type="ordered locus">BLA_0296</name>
</gene>
<reference key="1">
    <citation type="journal article" date="2009" name="J. Bacteriol.">
        <title>Genome sequence of the probiotic bacterium Bifidobacterium animalis subsp. lactis AD011.</title>
        <authorList>
            <person name="Kim J.F."/>
            <person name="Jeong H."/>
            <person name="Yu D.S."/>
            <person name="Choi S.-H."/>
            <person name="Hur C.-G."/>
            <person name="Park M.-S."/>
            <person name="Yoon S.H."/>
            <person name="Kim D.-W."/>
            <person name="Ji G.E."/>
            <person name="Park H.-S."/>
            <person name="Oh T.K."/>
        </authorList>
    </citation>
    <scope>NUCLEOTIDE SEQUENCE [LARGE SCALE GENOMIC DNA]</scope>
    <source>
        <strain>AD011</strain>
    </source>
</reference>
<feature type="chain" id="PRO_1000165660" description="Large ribosomal subunit protein uL1">
    <location>
        <begin position="1"/>
        <end position="229"/>
    </location>
</feature>